<keyword id="KW-0002">3D-structure</keyword>
<keyword id="KW-0963">Cytoplasm</keyword>
<keyword id="KW-0539">Nucleus</keyword>
<keyword id="KW-1185">Reference proteome</keyword>
<keyword id="KW-0808">Transferase</keyword>
<sequence>MSSALSQASPTAPRFSVLSWPQVRRLDAILCESVPIHGRGNFPTLSCRPRDLVQVVRSRLEQKGILVHNVRLNGSAASYVLHHDSGLGYKDLDLIFMVDLKGPDAFQVVKHAVLNCLLDFLPSGVNKEKITPMTLKEAYVQKLVKVCTESDRWSLISLSNNSGKNMELKFVDSLRRQFEFSVDSFQIILDSMLMFSQCSENPMSQSFHPTVTGESMYGDFEEAMDHLRNRIIATRNPEEIRGGGLLKYCNLLVRGFRPKSEVDMKTMQRYMCSRYFIDFPDIREQQRKLKCYLQDHFVGMEDKRYDYLMTLHQVVNESTVCLMGHERRQTLALIASLAVHVLSEQNHPQAVPTFTCYYQPAPYIGEVNYNSYYFTPVQPLMSCSHSYQTWLPCCN</sequence>
<accession>F7E7M3</accession>
<comment type="function">
    <text evidence="1 2">Catalyzes the transfer of one adenosine molecule from an ATP to an mRNA poly(A) tail bearing a 3'-OH terminal group in an ATP hydrolysis-dependent manner and participates in cytoplasmic polyadenylation (PubMed:34048638). May be involved in maintaining the translation efficiency of at least some genes through preventing degradation of their mRNAs (By similarity).</text>
</comment>
<comment type="catalytic activity">
    <reaction evidence="1">
        <text>RNA(n) + ATP = RNA(n)-3'-adenine ribonucleotide + diphosphate</text>
        <dbReference type="Rhea" id="RHEA:11332"/>
        <dbReference type="Rhea" id="RHEA-COMP:14527"/>
        <dbReference type="Rhea" id="RHEA-COMP:17347"/>
        <dbReference type="ChEBI" id="CHEBI:30616"/>
        <dbReference type="ChEBI" id="CHEBI:33019"/>
        <dbReference type="ChEBI" id="CHEBI:140395"/>
        <dbReference type="ChEBI" id="CHEBI:173115"/>
        <dbReference type="EC" id="2.7.7.19"/>
    </reaction>
    <physiologicalReaction direction="left-to-right" evidence="1">
        <dbReference type="Rhea" id="RHEA:11333"/>
    </physiologicalReaction>
</comment>
<comment type="subcellular location">
    <subcellularLocation>
        <location evidence="1">Cytoplasm</location>
    </subcellularLocation>
    <subcellularLocation>
        <location evidence="1">Nucleus</location>
    </subcellularLocation>
</comment>
<comment type="similarity">
    <text evidence="3">Belongs to the TENT family.</text>
</comment>
<organism>
    <name type="scientific">Xenopus tropicalis</name>
    <name type="common">Western clawed frog</name>
    <name type="synonym">Silurana tropicalis</name>
    <dbReference type="NCBI Taxonomy" id="8364"/>
    <lineage>
        <taxon>Eukaryota</taxon>
        <taxon>Metazoa</taxon>
        <taxon>Chordata</taxon>
        <taxon>Craniata</taxon>
        <taxon>Vertebrata</taxon>
        <taxon>Euteleostomi</taxon>
        <taxon>Amphibia</taxon>
        <taxon>Batrachia</taxon>
        <taxon>Anura</taxon>
        <taxon>Pipoidea</taxon>
        <taxon>Pipidae</taxon>
        <taxon>Xenopodinae</taxon>
        <taxon>Xenopus</taxon>
        <taxon>Silurana</taxon>
    </lineage>
</organism>
<name>TET5B_XENTR</name>
<reference key="1">
    <citation type="journal article" date="2010" name="Science">
        <title>The genome of the Western clawed frog Xenopus tropicalis.</title>
        <authorList>
            <person name="Hellsten U."/>
            <person name="Harland R.M."/>
            <person name="Gilchrist M.J."/>
            <person name="Hendrix D."/>
            <person name="Jurka J."/>
            <person name="Kapitonov V."/>
            <person name="Ovcharenko I."/>
            <person name="Putnam N.H."/>
            <person name="Shu S."/>
            <person name="Taher L."/>
            <person name="Blitz I.L."/>
            <person name="Blumberg B."/>
            <person name="Dichmann D.S."/>
            <person name="Dubchak I."/>
            <person name="Amaya E."/>
            <person name="Detter J.C."/>
            <person name="Fletcher R."/>
            <person name="Gerhard D.S."/>
            <person name="Goodstein D."/>
            <person name="Graves T."/>
            <person name="Grigoriev I.V."/>
            <person name="Grimwood J."/>
            <person name="Kawashima T."/>
            <person name="Lindquist E."/>
            <person name="Lucas S.M."/>
            <person name="Mead P.E."/>
            <person name="Mitros T."/>
            <person name="Ogino H."/>
            <person name="Ohta Y."/>
            <person name="Poliakov A.V."/>
            <person name="Pollet N."/>
            <person name="Robert J."/>
            <person name="Salamov A."/>
            <person name="Sater A.K."/>
            <person name="Schmutz J."/>
            <person name="Terry A."/>
            <person name="Vize P.D."/>
            <person name="Warren W.C."/>
            <person name="Wells D."/>
            <person name="Wills A."/>
            <person name="Wilson R.K."/>
            <person name="Zimmerman L.B."/>
            <person name="Zorn A.M."/>
            <person name="Grainger R."/>
            <person name="Grammer T."/>
            <person name="Khokha M.K."/>
            <person name="Richardson P.M."/>
            <person name="Rokhsar D.S."/>
        </authorList>
    </citation>
    <scope>NUCLEOTIDE SEQUENCE [LARGE SCALE GENOMIC DNA]</scope>
</reference>
<reference key="2">
    <citation type="journal article" date="2021" name="Cancer Commun. (Lond)">
        <title>Structural and functional characterization of multiple myeloma associated cytoplasmic poly(A) polymerase FAM46C.</title>
        <authorList>
            <person name="Zhang H."/>
            <person name="Zhang S.H."/>
            <person name="Hu J.L."/>
            <person name="Wu Y.T."/>
            <person name="Ma X.Y."/>
            <person name="Chen Y."/>
            <person name="Yu B."/>
            <person name="Liao S."/>
            <person name="Huang H."/>
            <person name="Gao S."/>
        </authorList>
    </citation>
    <scope>CATALYTIC ACTIVITY</scope>
    <scope>FUNCTION</scope>
</reference>
<reference evidence="4" key="3">
    <citation type="journal article" date="2020" name="Nucleic Acids Res.">
        <title>FAM46B is a prokaryotic-like cytoplasmic poly(A) polymerase essential in human embryonic stem cells.</title>
        <authorList>
            <person name="Hu J.L."/>
            <person name="Liang H."/>
            <person name="Zhang H."/>
            <person name="Yang M.Z."/>
            <person name="Sun W."/>
            <person name="Zhang P."/>
            <person name="Luo L."/>
            <person name="Feng J.X."/>
            <person name="Bai H."/>
            <person name="Liu F."/>
            <person name="Zhang T."/>
            <person name="Yang J.Y."/>
            <person name="Gao Q."/>
            <person name="Long Y."/>
            <person name="Ma X.Y."/>
            <person name="Chen Y."/>
            <person name="Zhong Q."/>
            <person name="Yu B."/>
            <person name="Liao S."/>
            <person name="Wang Y."/>
            <person name="Zhao Y."/>
            <person name="Zeng M.S."/>
            <person name="Cao N."/>
            <person name="Wang J."/>
            <person name="Chen W."/>
            <person name="Yang H.T."/>
            <person name="Gao S."/>
        </authorList>
    </citation>
    <scope>X-RAY CRYSTALLOGRAPHY (2.69 ANGSTROMS)</scope>
</reference>
<feature type="chain" id="PRO_0000454712" description="Terminal nucleotidyltransferase 5B">
    <location>
        <begin position="1"/>
        <end position="395"/>
    </location>
</feature>
<feature type="strand" evidence="5">
    <location>
        <begin position="14"/>
        <end position="17"/>
    </location>
</feature>
<feature type="helix" evidence="5">
    <location>
        <begin position="20"/>
        <end position="31"/>
    </location>
</feature>
<feature type="strand" evidence="5">
    <location>
        <begin position="34"/>
        <end position="36"/>
    </location>
</feature>
<feature type="strand" evidence="5">
    <location>
        <begin position="45"/>
        <end position="47"/>
    </location>
</feature>
<feature type="helix" evidence="5">
    <location>
        <begin position="49"/>
        <end position="62"/>
    </location>
</feature>
<feature type="strand" evidence="5">
    <location>
        <begin position="67"/>
        <end position="72"/>
    </location>
</feature>
<feature type="helix" evidence="5">
    <location>
        <begin position="74"/>
        <end position="81"/>
    </location>
</feature>
<feature type="strand" evidence="5">
    <location>
        <begin position="92"/>
        <end position="98"/>
    </location>
</feature>
<feature type="helix" evidence="5">
    <location>
        <begin position="105"/>
        <end position="119"/>
    </location>
</feature>
<feature type="helix" evidence="5">
    <location>
        <begin position="132"/>
        <end position="139"/>
    </location>
</feature>
<feature type="strand" evidence="5">
    <location>
        <begin position="140"/>
        <end position="150"/>
    </location>
</feature>
<feature type="strand" evidence="5">
    <location>
        <begin position="152"/>
        <end position="159"/>
    </location>
</feature>
<feature type="strand" evidence="5">
    <location>
        <begin position="161"/>
        <end position="163"/>
    </location>
</feature>
<feature type="strand" evidence="5">
    <location>
        <begin position="165"/>
        <end position="173"/>
    </location>
</feature>
<feature type="helix" evidence="5">
    <location>
        <begin position="181"/>
        <end position="183"/>
    </location>
</feature>
<feature type="strand" evidence="5">
    <location>
        <begin position="185"/>
        <end position="188"/>
    </location>
</feature>
<feature type="helix" evidence="5">
    <location>
        <begin position="190"/>
        <end position="196"/>
    </location>
</feature>
<feature type="strand" evidence="5">
    <location>
        <begin position="205"/>
        <end position="207"/>
    </location>
</feature>
<feature type="strand" evidence="5">
    <location>
        <begin position="212"/>
        <end position="215"/>
    </location>
</feature>
<feature type="helix" evidence="5">
    <location>
        <begin position="220"/>
        <end position="229"/>
    </location>
</feature>
<feature type="helix" evidence="5">
    <location>
        <begin position="237"/>
        <end position="239"/>
    </location>
</feature>
<feature type="helix" evidence="5">
    <location>
        <begin position="244"/>
        <end position="253"/>
    </location>
</feature>
<feature type="strand" evidence="5">
    <location>
        <begin position="257"/>
        <end position="260"/>
    </location>
</feature>
<feature type="helix" evidence="5">
    <location>
        <begin position="261"/>
        <end position="278"/>
    </location>
</feature>
<feature type="helix" evidence="5">
    <location>
        <begin position="282"/>
        <end position="295"/>
    </location>
</feature>
<feature type="helix" evidence="5">
    <location>
        <begin position="303"/>
        <end position="318"/>
    </location>
</feature>
<feature type="helix" evidence="5">
    <location>
        <begin position="324"/>
        <end position="342"/>
    </location>
</feature>
<proteinExistence type="evidence at protein level"/>
<dbReference type="EC" id="2.7.7.19" evidence="1"/>
<dbReference type="EMBL" id="AAMC02005713">
    <property type="status" value="NOT_ANNOTATED_CDS"/>
    <property type="molecule type" value="Genomic_DNA"/>
</dbReference>
<dbReference type="RefSeq" id="NP_001017206.1">
    <property type="nucleotide sequence ID" value="NM_001017206.2"/>
</dbReference>
<dbReference type="PDB" id="6JYJ">
    <property type="method" value="X-ray"/>
    <property type="resolution" value="2.69 A"/>
    <property type="chains" value="A/B/C=1-395"/>
</dbReference>
<dbReference type="PDBsum" id="6JYJ"/>
<dbReference type="SMR" id="F7E7M3"/>
<dbReference type="GeneID" id="549960"/>
<dbReference type="KEGG" id="xtr:549960"/>
<dbReference type="AGR" id="Xenbase:XB-GENE-952160"/>
<dbReference type="CTD" id="115572"/>
<dbReference type="Xenbase" id="XB-GENE-952160">
    <property type="gene designation" value="tent5b"/>
</dbReference>
<dbReference type="eggNOG" id="KOG3852">
    <property type="taxonomic scope" value="Eukaryota"/>
</dbReference>
<dbReference type="HOGENOM" id="CLU_008115_2_0_1"/>
<dbReference type="InParanoid" id="F7E7M3"/>
<dbReference type="OMA" id="CVHSVRL"/>
<dbReference type="OrthoDB" id="10065073at2759"/>
<dbReference type="PhylomeDB" id="F7E7M3"/>
<dbReference type="TreeFam" id="TF315239"/>
<dbReference type="BRENDA" id="2.7.7.19">
    <property type="organism ID" value="8483"/>
</dbReference>
<dbReference type="Proteomes" id="UP000008143">
    <property type="component" value="Chromosome 2"/>
</dbReference>
<dbReference type="Bgee" id="ENSXETG00000020683">
    <property type="expression patterns" value="Expressed in blastula and 15 other cell types or tissues"/>
</dbReference>
<dbReference type="ExpressionAtlas" id="F7E7M3">
    <property type="expression patterns" value="differential"/>
</dbReference>
<dbReference type="GO" id="GO:0005737">
    <property type="term" value="C:cytoplasm"/>
    <property type="evidence" value="ECO:0000250"/>
    <property type="project" value="UniProtKB"/>
</dbReference>
<dbReference type="GO" id="GO:0005634">
    <property type="term" value="C:nucleus"/>
    <property type="evidence" value="ECO:0000250"/>
    <property type="project" value="UniProtKB"/>
</dbReference>
<dbReference type="GO" id="GO:1990817">
    <property type="term" value="F:poly(A) RNA polymerase activity"/>
    <property type="evidence" value="ECO:0000250"/>
    <property type="project" value="UniProtKB"/>
</dbReference>
<dbReference type="GO" id="GO:0043066">
    <property type="term" value="P:negative regulation of apoptotic process"/>
    <property type="evidence" value="ECO:0000250"/>
    <property type="project" value="UniProtKB"/>
</dbReference>
<dbReference type="GO" id="GO:0045786">
    <property type="term" value="P:negative regulation of cell cycle"/>
    <property type="evidence" value="ECO:0000250"/>
    <property type="project" value="UniProtKB"/>
</dbReference>
<dbReference type="GO" id="GO:0008285">
    <property type="term" value="P:negative regulation of cell population proliferation"/>
    <property type="evidence" value="ECO:0000250"/>
    <property type="project" value="UniProtKB"/>
</dbReference>
<dbReference type="GO" id="GO:0045727">
    <property type="term" value="P:positive regulation of translation"/>
    <property type="evidence" value="ECO:0000250"/>
    <property type="project" value="UniProtKB"/>
</dbReference>
<dbReference type="InterPro" id="IPR012937">
    <property type="entry name" value="TET5"/>
</dbReference>
<dbReference type="PANTHER" id="PTHR12974">
    <property type="entry name" value="PRION-LIKE- Q/N-RICH -DOMAIN-BEARING PROTEIN PROTEIN 44"/>
    <property type="match status" value="1"/>
</dbReference>
<dbReference type="PANTHER" id="PTHR12974:SF46">
    <property type="entry name" value="TERMINAL NUCLEOTIDYLTRANSFERASE 5B"/>
    <property type="match status" value="1"/>
</dbReference>
<dbReference type="Pfam" id="PF07984">
    <property type="entry name" value="NTP_transf_7"/>
    <property type="match status" value="1"/>
</dbReference>
<dbReference type="SMART" id="SM01153">
    <property type="entry name" value="DUF1693"/>
    <property type="match status" value="1"/>
</dbReference>
<evidence type="ECO:0000250" key="1">
    <source>
        <dbReference type="UniProtKB" id="Q96A09"/>
    </source>
</evidence>
<evidence type="ECO:0000269" key="2">
    <source>
    </source>
</evidence>
<evidence type="ECO:0000305" key="3"/>
<evidence type="ECO:0007744" key="4">
    <source>
        <dbReference type="PDB" id="6JYJ"/>
    </source>
</evidence>
<evidence type="ECO:0007829" key="5">
    <source>
        <dbReference type="PDB" id="6JYJ"/>
    </source>
</evidence>
<protein>
    <recommendedName>
        <fullName evidence="1">Terminal nucleotidyltransferase 5B</fullName>
        <ecNumber evidence="1">2.7.7.19</ecNumber>
    </recommendedName>
    <alternativeName>
        <fullName>Non-canonical poly(A) polymerase FAM46B</fullName>
    </alternativeName>
</protein>
<gene>
    <name evidence="1" type="primary">tent5b</name>
</gene>